<accession>A3KNJ8</accession>
<reference key="1">
    <citation type="submission" date="2007-03" db="EMBL/GenBank/DDBJ databases">
        <authorList>
            <consortium name="NIH - Zebrafish Gene Collection (ZGC) project"/>
        </authorList>
    </citation>
    <scope>NUCLEOTIDE SEQUENCE [LARGE SCALE MRNA]</scope>
</reference>
<protein>
    <recommendedName>
        <fullName>LYR motif-containing protein 5B</fullName>
    </recommendedName>
</protein>
<feature type="chain" id="PRO_0000370338" description="LYR motif-containing protein 5B">
    <location>
        <begin position="1"/>
        <end position="84"/>
    </location>
</feature>
<evidence type="ECO:0000305" key="1"/>
<proteinExistence type="inferred from homology"/>
<gene>
    <name type="primary">lyrm5b</name>
    <name type="ORF">zgc:162127</name>
</gene>
<organism>
    <name type="scientific">Danio rerio</name>
    <name type="common">Zebrafish</name>
    <name type="synonym">Brachydanio rerio</name>
    <dbReference type="NCBI Taxonomy" id="7955"/>
    <lineage>
        <taxon>Eukaryota</taxon>
        <taxon>Metazoa</taxon>
        <taxon>Chordata</taxon>
        <taxon>Craniata</taxon>
        <taxon>Vertebrata</taxon>
        <taxon>Euteleostomi</taxon>
        <taxon>Actinopterygii</taxon>
        <taxon>Neopterygii</taxon>
        <taxon>Teleostei</taxon>
        <taxon>Ostariophysi</taxon>
        <taxon>Cypriniformes</taxon>
        <taxon>Danionidae</taxon>
        <taxon>Danioninae</taxon>
        <taxon>Danio</taxon>
    </lineage>
</organism>
<name>LYM5B_DANRE</name>
<comment type="similarity">
    <text evidence="1">Belongs to the complex I LYR family.</text>
</comment>
<sequence length="84" mass="10187">MANPFRAEVKQLYKALLFLGREYPKGADYFRERLRAAFAKNKDMRDPDKIKQLISRGEFVVKELEALYYLRKYRALKKRYYEAE</sequence>
<dbReference type="EMBL" id="BC133879">
    <property type="protein sequence ID" value="AAI33880.1"/>
    <property type="molecule type" value="mRNA"/>
</dbReference>
<dbReference type="RefSeq" id="NP_001153447.1">
    <property type="nucleotide sequence ID" value="NM_001159975.2"/>
</dbReference>
<dbReference type="SMR" id="A3KNJ8"/>
<dbReference type="FunCoup" id="A3KNJ8">
    <property type="interactions" value="304"/>
</dbReference>
<dbReference type="STRING" id="7955.ENSDARP00000113978"/>
<dbReference type="PaxDb" id="7955-ENSDARP00000113978"/>
<dbReference type="Ensembl" id="ENSDART00000133859">
    <property type="protein sequence ID" value="ENSDARP00000113978"/>
    <property type="gene ID" value="ENSDARG00000045827"/>
</dbReference>
<dbReference type="GeneID" id="561760"/>
<dbReference type="KEGG" id="dre:561760"/>
<dbReference type="AGR" id="ZFIN:ZDB-GENE-070424-20"/>
<dbReference type="CTD" id="561760"/>
<dbReference type="ZFIN" id="ZDB-GENE-070424-20">
    <property type="gene designation" value="lyrm5b"/>
</dbReference>
<dbReference type="eggNOG" id="ENOG502S4S4">
    <property type="taxonomic scope" value="Eukaryota"/>
</dbReference>
<dbReference type="HOGENOM" id="CLU_141157_2_0_1"/>
<dbReference type="InParanoid" id="A3KNJ8"/>
<dbReference type="OMA" id="RGEYMAR"/>
<dbReference type="OrthoDB" id="10258445at2759"/>
<dbReference type="PhylomeDB" id="A3KNJ8"/>
<dbReference type="TreeFam" id="TF300251"/>
<dbReference type="PRO" id="PR:A3KNJ8"/>
<dbReference type="Proteomes" id="UP000000437">
    <property type="component" value="Chromosome 25"/>
</dbReference>
<dbReference type="Bgee" id="ENSDARG00000045827">
    <property type="expression patterns" value="Expressed in intestine and 17 other cell types or tissues"/>
</dbReference>
<dbReference type="GO" id="GO:0005739">
    <property type="term" value="C:mitochondrion"/>
    <property type="evidence" value="ECO:0000318"/>
    <property type="project" value="GO_Central"/>
</dbReference>
<dbReference type="GO" id="GO:0090324">
    <property type="term" value="P:negative regulation of oxidative phosphorylation"/>
    <property type="evidence" value="ECO:0007669"/>
    <property type="project" value="InterPro"/>
</dbReference>
<dbReference type="GO" id="GO:0022904">
    <property type="term" value="P:respiratory electron transport chain"/>
    <property type="evidence" value="ECO:0000318"/>
    <property type="project" value="GO_Central"/>
</dbReference>
<dbReference type="CDD" id="cd20265">
    <property type="entry name" value="Complex1_LYR_ETFRF1_LYRM5"/>
    <property type="match status" value="1"/>
</dbReference>
<dbReference type="InterPro" id="IPR008011">
    <property type="entry name" value="Complex1_LYR_dom"/>
</dbReference>
<dbReference type="InterPro" id="IPR045296">
    <property type="entry name" value="Complex1_LYR_ETFRF1_LYRM5"/>
</dbReference>
<dbReference type="InterPro" id="IPR052000">
    <property type="entry name" value="ETFRF1"/>
</dbReference>
<dbReference type="PANTHER" id="PTHR21024:SF0">
    <property type="entry name" value="ELECTRON TRANSFER FLAVOPROTEIN REGULATORY FACTOR 1"/>
    <property type="match status" value="1"/>
</dbReference>
<dbReference type="PANTHER" id="PTHR21024">
    <property type="entry name" value="GROWTH HORMONE-INDUCIBLE SOLUBLE PROTEIN-RELATED"/>
    <property type="match status" value="1"/>
</dbReference>
<dbReference type="Pfam" id="PF05347">
    <property type="entry name" value="Complex1_LYR"/>
    <property type="match status" value="1"/>
</dbReference>
<keyword id="KW-1185">Reference proteome</keyword>